<reference key="1">
    <citation type="journal article" date="1999" name="Nature">
        <title>Evidence for lateral gene transfer between Archaea and Bacteria from genome sequence of Thermotoga maritima.</title>
        <authorList>
            <person name="Nelson K.E."/>
            <person name="Clayton R.A."/>
            <person name="Gill S.R."/>
            <person name="Gwinn M.L."/>
            <person name="Dodson R.J."/>
            <person name="Haft D.H."/>
            <person name="Hickey E.K."/>
            <person name="Peterson J.D."/>
            <person name="Nelson W.C."/>
            <person name="Ketchum K.A."/>
            <person name="McDonald L.A."/>
            <person name="Utterback T.R."/>
            <person name="Malek J.A."/>
            <person name="Linher K.D."/>
            <person name="Garrett M.M."/>
            <person name="Stewart A.M."/>
            <person name="Cotton M.D."/>
            <person name="Pratt M.S."/>
            <person name="Phillips C.A."/>
            <person name="Richardson D.L."/>
            <person name="Heidelberg J.F."/>
            <person name="Sutton G.G."/>
            <person name="Fleischmann R.D."/>
            <person name="Eisen J.A."/>
            <person name="White O."/>
            <person name="Salzberg S.L."/>
            <person name="Smith H.O."/>
            <person name="Venter J.C."/>
            <person name="Fraser C.M."/>
        </authorList>
    </citation>
    <scope>NUCLEOTIDE SEQUENCE [LARGE SCALE GENOMIC DNA]</scope>
    <source>
        <strain>ATCC 43589 / DSM 3109 / JCM 10099 / NBRC 100826 / MSB8</strain>
    </source>
</reference>
<comment type="function">
    <text evidence="1">In the phosphorylated form it could act as an anti-anti-sigma factor that counteracts an anti-sigma factor and thus releases a sigma factor from inhibition.</text>
</comment>
<comment type="PTM">
    <text evidence="1">Phosphorylated on a serine residue.</text>
</comment>
<comment type="similarity">
    <text evidence="3">Belongs to the anti-sigma-factor antagonist family.</text>
</comment>
<sequence>MFPYKIVDDVVILMPNKELNIENAHLFKKWVFDEFLNKGYNKIFLVLSDVESIDSFSLGVIVNILKSISSSGGFFALVSPNEKVERVLSLTNLDRIVKIYDTISEAMEEVRRK</sequence>
<evidence type="ECO:0000250" key="1"/>
<evidence type="ECO:0000255" key="2">
    <source>
        <dbReference type="PROSITE-ProRule" id="PRU00198"/>
    </source>
</evidence>
<evidence type="ECO:0000305" key="3"/>
<evidence type="ECO:0007829" key="4">
    <source>
        <dbReference type="PDB" id="3F43"/>
    </source>
</evidence>
<accession>Q9X0H0</accession>
<keyword id="KW-0002">3D-structure</keyword>
<keyword id="KW-0597">Phosphoprotein</keyword>
<keyword id="KW-1185">Reference proteome</keyword>
<dbReference type="EMBL" id="AE000512">
    <property type="protein sequence ID" value="AAD36158.1"/>
    <property type="molecule type" value="Genomic_DNA"/>
</dbReference>
<dbReference type="PIR" id="A72297">
    <property type="entry name" value="A72297"/>
</dbReference>
<dbReference type="RefSeq" id="NP_228887.1">
    <property type="nucleotide sequence ID" value="NC_000853.1"/>
</dbReference>
<dbReference type="RefSeq" id="WP_004080402.1">
    <property type="nucleotide sequence ID" value="NZ_CP011107.1"/>
</dbReference>
<dbReference type="PDB" id="2KA5">
    <property type="method" value="NMR"/>
    <property type="chains" value="A=1-113"/>
</dbReference>
<dbReference type="PDB" id="3F43">
    <property type="method" value="X-ray"/>
    <property type="resolution" value="1.59 A"/>
    <property type="chains" value="A=1-113"/>
</dbReference>
<dbReference type="PDBsum" id="2KA5"/>
<dbReference type="PDBsum" id="3F43"/>
<dbReference type="BMRB" id="Q9X0H0"/>
<dbReference type="SMR" id="Q9X0H0"/>
<dbReference type="STRING" id="243274.TM_1081"/>
<dbReference type="PaxDb" id="243274-THEMA_08950"/>
<dbReference type="EnsemblBacteria" id="AAD36158">
    <property type="protein sequence ID" value="AAD36158"/>
    <property type="gene ID" value="TM_1081"/>
</dbReference>
<dbReference type="KEGG" id="tma:TM1081"/>
<dbReference type="KEGG" id="tmi:THEMA_08950"/>
<dbReference type="KEGG" id="tmm:Tmari_1085"/>
<dbReference type="KEGG" id="tmw:THMA_1103"/>
<dbReference type="eggNOG" id="COG1366">
    <property type="taxonomic scope" value="Bacteria"/>
</dbReference>
<dbReference type="InParanoid" id="Q9X0H0"/>
<dbReference type="OrthoDB" id="37574at2"/>
<dbReference type="EvolutionaryTrace" id="Q9X0H0"/>
<dbReference type="Proteomes" id="UP000008183">
    <property type="component" value="Chromosome"/>
</dbReference>
<dbReference type="GO" id="GO:0043856">
    <property type="term" value="F:anti-sigma factor antagonist activity"/>
    <property type="evidence" value="ECO:0000318"/>
    <property type="project" value="GO_Central"/>
</dbReference>
<dbReference type="CDD" id="cd07043">
    <property type="entry name" value="STAS_anti-anti-sigma_factors"/>
    <property type="match status" value="1"/>
</dbReference>
<dbReference type="FunFam" id="3.30.750.24:FF:000092">
    <property type="entry name" value="Putative anti-sigma factor antagonist TM_1081"/>
    <property type="match status" value="1"/>
</dbReference>
<dbReference type="Gene3D" id="3.30.750.24">
    <property type="entry name" value="STAS domain"/>
    <property type="match status" value="1"/>
</dbReference>
<dbReference type="InterPro" id="IPR003658">
    <property type="entry name" value="Anti-sigma_ant"/>
</dbReference>
<dbReference type="InterPro" id="IPR002645">
    <property type="entry name" value="STAS_dom"/>
</dbReference>
<dbReference type="InterPro" id="IPR036513">
    <property type="entry name" value="STAS_dom_sf"/>
</dbReference>
<dbReference type="NCBIfam" id="TIGR00377">
    <property type="entry name" value="ant_ant_sig"/>
    <property type="match status" value="1"/>
</dbReference>
<dbReference type="PANTHER" id="PTHR33495:SF2">
    <property type="entry name" value="ANTI-SIGMA FACTOR ANTAGONIST TM_1081-RELATED"/>
    <property type="match status" value="1"/>
</dbReference>
<dbReference type="PANTHER" id="PTHR33495">
    <property type="entry name" value="ANTI-SIGMA FACTOR ANTAGONIST TM_1081-RELATED-RELATED"/>
    <property type="match status" value="1"/>
</dbReference>
<dbReference type="Pfam" id="PF01740">
    <property type="entry name" value="STAS"/>
    <property type="match status" value="1"/>
</dbReference>
<dbReference type="SUPFAM" id="SSF52091">
    <property type="entry name" value="SpoIIaa-like"/>
    <property type="match status" value="1"/>
</dbReference>
<dbReference type="PROSITE" id="PS50801">
    <property type="entry name" value="STAS"/>
    <property type="match status" value="1"/>
</dbReference>
<feature type="chain" id="PRO_0000194206" description="Putative anti-sigma factor antagonist TM_1081">
    <location>
        <begin position="1"/>
        <end position="113"/>
    </location>
</feature>
<feature type="domain" description="STAS" evidence="2">
    <location>
        <begin position="1"/>
        <end position="110"/>
    </location>
</feature>
<feature type="modified residue" description="Phosphoserine" evidence="1">
    <location>
        <position position="55"/>
    </location>
</feature>
<feature type="strand" evidence="4">
    <location>
        <begin position="4"/>
        <end position="7"/>
    </location>
</feature>
<feature type="strand" evidence="4">
    <location>
        <begin position="10"/>
        <end position="13"/>
    </location>
</feature>
<feature type="turn" evidence="4">
    <location>
        <begin position="21"/>
        <end position="23"/>
    </location>
</feature>
<feature type="helix" evidence="4">
    <location>
        <begin position="24"/>
        <end position="34"/>
    </location>
</feature>
<feature type="helix" evidence="4">
    <location>
        <begin position="36"/>
        <end position="38"/>
    </location>
</feature>
<feature type="strand" evidence="4">
    <location>
        <begin position="42"/>
        <end position="46"/>
    </location>
</feature>
<feature type="helix" evidence="4">
    <location>
        <begin position="55"/>
        <end position="71"/>
    </location>
</feature>
<feature type="strand" evidence="4">
    <location>
        <begin position="74"/>
        <end position="78"/>
    </location>
</feature>
<feature type="helix" evidence="4">
    <location>
        <begin position="82"/>
        <end position="90"/>
    </location>
</feature>
<feature type="helix" evidence="4">
    <location>
        <begin position="93"/>
        <end position="95"/>
    </location>
</feature>
<feature type="strand" evidence="4">
    <location>
        <begin position="97"/>
        <end position="102"/>
    </location>
</feature>
<feature type="helix" evidence="4">
    <location>
        <begin position="103"/>
        <end position="111"/>
    </location>
</feature>
<name>Y1081_THEMA</name>
<proteinExistence type="evidence at protein level"/>
<protein>
    <recommendedName>
        <fullName>Putative anti-sigma factor antagonist TM_1081</fullName>
    </recommendedName>
</protein>
<organism>
    <name type="scientific">Thermotoga maritima (strain ATCC 43589 / DSM 3109 / JCM 10099 / NBRC 100826 / MSB8)</name>
    <dbReference type="NCBI Taxonomy" id="243274"/>
    <lineage>
        <taxon>Bacteria</taxon>
        <taxon>Thermotogati</taxon>
        <taxon>Thermotogota</taxon>
        <taxon>Thermotogae</taxon>
        <taxon>Thermotogales</taxon>
        <taxon>Thermotogaceae</taxon>
        <taxon>Thermotoga</taxon>
    </lineage>
</organism>
<gene>
    <name type="ordered locus">TM_1081</name>
</gene>